<comment type="function">
    <text evidence="1">This protein binds to the 23S rRNA, and is important in its secondary structure. It is located near the subunit interface in the base of the L7/L12 stalk, and near the tRNA binding site of the peptidyltransferase center.</text>
</comment>
<comment type="subunit">
    <text evidence="1">Part of the 50S ribosomal subunit.</text>
</comment>
<comment type="similarity">
    <text evidence="1">Belongs to the universal ribosomal protein uL6 family.</text>
</comment>
<keyword id="KW-0687">Ribonucleoprotein</keyword>
<keyword id="KW-0689">Ribosomal protein</keyword>
<keyword id="KW-0694">RNA-binding</keyword>
<keyword id="KW-0699">rRNA-binding</keyword>
<organism>
    <name type="scientific">Ruthia magnifica subsp. Calyptogena magnifica</name>
    <dbReference type="NCBI Taxonomy" id="413404"/>
    <lineage>
        <taxon>Bacteria</taxon>
        <taxon>Pseudomonadati</taxon>
        <taxon>Pseudomonadota</taxon>
        <taxon>Gammaproteobacteria</taxon>
        <taxon>Candidatus Pseudothioglobaceae</taxon>
        <taxon>Candidatus Ruthturnera</taxon>
    </lineage>
</organism>
<protein>
    <recommendedName>
        <fullName evidence="1">Large ribosomal subunit protein uL6</fullName>
    </recommendedName>
    <alternativeName>
        <fullName evidence="2">50S ribosomal protein L6</fullName>
    </alternativeName>
</protein>
<proteinExistence type="inferred from homology"/>
<evidence type="ECO:0000255" key="1">
    <source>
        <dbReference type="HAMAP-Rule" id="MF_01365"/>
    </source>
</evidence>
<evidence type="ECO:0000305" key="2"/>
<accession>A1AVL5</accession>
<sequence>MSRVAKSPITIPTGVEVTITSNLMSVKGRFGQLNMSIHPCIVITNTNNKLSFDITITEKKEQKKAWAQAGTARANTANLIQGVTEGWEKKLTLIGVGYRAKVMERVLNLTLGFSHPINYKLPEGITVEAPSQTEIIIKGMDKQKVGQVAAEIRAYHPPEPYKGKGVCYIDEQVVRKEAKKK</sequence>
<dbReference type="EMBL" id="CP000488">
    <property type="protein sequence ID" value="ABL01972.1"/>
    <property type="molecule type" value="Genomic_DNA"/>
</dbReference>
<dbReference type="RefSeq" id="WP_011737598.1">
    <property type="nucleotide sequence ID" value="NC_008610.1"/>
</dbReference>
<dbReference type="SMR" id="A1AVL5"/>
<dbReference type="STRING" id="413404.Rmag_0180"/>
<dbReference type="KEGG" id="rma:Rmag_0180"/>
<dbReference type="eggNOG" id="COG0097">
    <property type="taxonomic scope" value="Bacteria"/>
</dbReference>
<dbReference type="HOGENOM" id="CLU_065464_1_2_6"/>
<dbReference type="OrthoDB" id="9805007at2"/>
<dbReference type="Proteomes" id="UP000002587">
    <property type="component" value="Chromosome"/>
</dbReference>
<dbReference type="GO" id="GO:0022625">
    <property type="term" value="C:cytosolic large ribosomal subunit"/>
    <property type="evidence" value="ECO:0007669"/>
    <property type="project" value="TreeGrafter"/>
</dbReference>
<dbReference type="GO" id="GO:0019843">
    <property type="term" value="F:rRNA binding"/>
    <property type="evidence" value="ECO:0007669"/>
    <property type="project" value="UniProtKB-UniRule"/>
</dbReference>
<dbReference type="GO" id="GO:0003735">
    <property type="term" value="F:structural constituent of ribosome"/>
    <property type="evidence" value="ECO:0007669"/>
    <property type="project" value="InterPro"/>
</dbReference>
<dbReference type="GO" id="GO:0002181">
    <property type="term" value="P:cytoplasmic translation"/>
    <property type="evidence" value="ECO:0007669"/>
    <property type="project" value="TreeGrafter"/>
</dbReference>
<dbReference type="FunFam" id="3.90.930.12:FF:000001">
    <property type="entry name" value="50S ribosomal protein L6"/>
    <property type="match status" value="1"/>
</dbReference>
<dbReference type="Gene3D" id="3.90.930.12">
    <property type="entry name" value="Ribosomal protein L6, alpha-beta domain"/>
    <property type="match status" value="2"/>
</dbReference>
<dbReference type="HAMAP" id="MF_01365_B">
    <property type="entry name" value="Ribosomal_uL6_B"/>
    <property type="match status" value="1"/>
</dbReference>
<dbReference type="InterPro" id="IPR000702">
    <property type="entry name" value="Ribosomal_uL6-like"/>
</dbReference>
<dbReference type="InterPro" id="IPR036789">
    <property type="entry name" value="Ribosomal_uL6-like_a/b-dom_sf"/>
</dbReference>
<dbReference type="InterPro" id="IPR020040">
    <property type="entry name" value="Ribosomal_uL6_a/b-dom"/>
</dbReference>
<dbReference type="InterPro" id="IPR019906">
    <property type="entry name" value="Ribosomal_uL6_bac-type"/>
</dbReference>
<dbReference type="InterPro" id="IPR002358">
    <property type="entry name" value="Ribosomal_uL6_CS"/>
</dbReference>
<dbReference type="NCBIfam" id="TIGR03654">
    <property type="entry name" value="L6_bact"/>
    <property type="match status" value="1"/>
</dbReference>
<dbReference type="PANTHER" id="PTHR11655">
    <property type="entry name" value="60S/50S RIBOSOMAL PROTEIN L6/L9"/>
    <property type="match status" value="1"/>
</dbReference>
<dbReference type="PANTHER" id="PTHR11655:SF14">
    <property type="entry name" value="LARGE RIBOSOMAL SUBUNIT PROTEIN UL6M"/>
    <property type="match status" value="1"/>
</dbReference>
<dbReference type="Pfam" id="PF00347">
    <property type="entry name" value="Ribosomal_L6"/>
    <property type="match status" value="2"/>
</dbReference>
<dbReference type="PIRSF" id="PIRSF002162">
    <property type="entry name" value="Ribosomal_L6"/>
    <property type="match status" value="1"/>
</dbReference>
<dbReference type="PRINTS" id="PR00059">
    <property type="entry name" value="RIBOSOMALL6"/>
</dbReference>
<dbReference type="SUPFAM" id="SSF56053">
    <property type="entry name" value="Ribosomal protein L6"/>
    <property type="match status" value="2"/>
</dbReference>
<dbReference type="PROSITE" id="PS00525">
    <property type="entry name" value="RIBOSOMAL_L6_1"/>
    <property type="match status" value="1"/>
</dbReference>
<gene>
    <name evidence="1" type="primary">rplF</name>
    <name type="ordered locus">Rmag_0180</name>
</gene>
<name>RL6_RUTMC</name>
<reference key="1">
    <citation type="journal article" date="2007" name="Science">
        <title>The Calyptogena magnifica chemoautotrophic symbiont genome.</title>
        <authorList>
            <person name="Newton I.L.G."/>
            <person name="Woyke T."/>
            <person name="Auchtung T.A."/>
            <person name="Dilly G.F."/>
            <person name="Dutton R.J."/>
            <person name="Fisher M.C."/>
            <person name="Fontanez K.M."/>
            <person name="Lau E."/>
            <person name="Stewart F.J."/>
            <person name="Richardson P.M."/>
            <person name="Barry K.W."/>
            <person name="Saunders E."/>
            <person name="Detter J.C."/>
            <person name="Wu D."/>
            <person name="Eisen J.A."/>
            <person name="Cavanaugh C.M."/>
        </authorList>
    </citation>
    <scope>NUCLEOTIDE SEQUENCE [LARGE SCALE GENOMIC DNA]</scope>
</reference>
<feature type="chain" id="PRO_1000055300" description="Large ribosomal subunit protein uL6">
    <location>
        <begin position="1"/>
        <end position="181"/>
    </location>
</feature>